<keyword id="KW-1185">Reference proteome</keyword>
<keyword id="KW-0687">Ribonucleoprotein</keyword>
<keyword id="KW-0689">Ribosomal protein</keyword>
<dbReference type="EMBL" id="AE016822">
    <property type="protein sequence ID" value="AAT90107.1"/>
    <property type="molecule type" value="Genomic_DNA"/>
</dbReference>
<dbReference type="RefSeq" id="WP_011187086.1">
    <property type="nucleotide sequence ID" value="NC_006087.1"/>
</dbReference>
<dbReference type="SMR" id="Q6ABY5"/>
<dbReference type="STRING" id="281090.Lxx24990"/>
<dbReference type="GeneID" id="92984638"/>
<dbReference type="KEGG" id="lxx:Lxx24990"/>
<dbReference type="eggNOG" id="COG0267">
    <property type="taxonomic scope" value="Bacteria"/>
</dbReference>
<dbReference type="HOGENOM" id="CLU_190949_1_1_11"/>
<dbReference type="Proteomes" id="UP000001306">
    <property type="component" value="Chromosome"/>
</dbReference>
<dbReference type="GO" id="GO:0022625">
    <property type="term" value="C:cytosolic large ribosomal subunit"/>
    <property type="evidence" value="ECO:0007669"/>
    <property type="project" value="TreeGrafter"/>
</dbReference>
<dbReference type="GO" id="GO:0003735">
    <property type="term" value="F:structural constituent of ribosome"/>
    <property type="evidence" value="ECO:0007669"/>
    <property type="project" value="InterPro"/>
</dbReference>
<dbReference type="GO" id="GO:0006412">
    <property type="term" value="P:translation"/>
    <property type="evidence" value="ECO:0007669"/>
    <property type="project" value="UniProtKB-UniRule"/>
</dbReference>
<dbReference type="FunFam" id="2.20.28.120:FF:000002">
    <property type="entry name" value="50S ribosomal protein L33"/>
    <property type="match status" value="1"/>
</dbReference>
<dbReference type="Gene3D" id="2.20.28.120">
    <property type="entry name" value="Ribosomal protein L33"/>
    <property type="match status" value="1"/>
</dbReference>
<dbReference type="HAMAP" id="MF_00294">
    <property type="entry name" value="Ribosomal_bL33"/>
    <property type="match status" value="1"/>
</dbReference>
<dbReference type="InterPro" id="IPR001705">
    <property type="entry name" value="Ribosomal_bL33"/>
</dbReference>
<dbReference type="InterPro" id="IPR018264">
    <property type="entry name" value="Ribosomal_bL33_CS"/>
</dbReference>
<dbReference type="InterPro" id="IPR038584">
    <property type="entry name" value="Ribosomal_bL33_sf"/>
</dbReference>
<dbReference type="InterPro" id="IPR011332">
    <property type="entry name" value="Ribosomal_zn-bd"/>
</dbReference>
<dbReference type="NCBIfam" id="NF001860">
    <property type="entry name" value="PRK00595.1"/>
    <property type="match status" value="1"/>
</dbReference>
<dbReference type="NCBIfam" id="TIGR01023">
    <property type="entry name" value="rpmG_bact"/>
    <property type="match status" value="1"/>
</dbReference>
<dbReference type="PANTHER" id="PTHR15238">
    <property type="entry name" value="54S RIBOSOMAL PROTEIN L39, MITOCHONDRIAL"/>
    <property type="match status" value="1"/>
</dbReference>
<dbReference type="PANTHER" id="PTHR15238:SF1">
    <property type="entry name" value="LARGE RIBOSOMAL SUBUNIT PROTEIN BL33M"/>
    <property type="match status" value="1"/>
</dbReference>
<dbReference type="Pfam" id="PF00471">
    <property type="entry name" value="Ribosomal_L33"/>
    <property type="match status" value="1"/>
</dbReference>
<dbReference type="SUPFAM" id="SSF57829">
    <property type="entry name" value="Zn-binding ribosomal proteins"/>
    <property type="match status" value="1"/>
</dbReference>
<dbReference type="PROSITE" id="PS00582">
    <property type="entry name" value="RIBOSOMAL_L33"/>
    <property type="match status" value="1"/>
</dbReference>
<gene>
    <name evidence="1" type="primary">rpmG</name>
    <name type="ordered locus">Lxx24990</name>
</gene>
<reference key="1">
    <citation type="journal article" date="2004" name="Mol. Plant Microbe Interact.">
        <title>The genome sequence of the Gram-positive sugarcane pathogen Leifsonia xyli subsp. xyli.</title>
        <authorList>
            <person name="Monteiro-Vitorello C.B."/>
            <person name="Camargo L.E.A."/>
            <person name="Van Sluys M.A."/>
            <person name="Kitajima J.P."/>
            <person name="Truffi D."/>
            <person name="do Amaral A.M."/>
            <person name="Harakava R."/>
            <person name="de Oliveira J.C.F."/>
            <person name="Wood D."/>
            <person name="de Oliveira M.C."/>
            <person name="Miyaki C.Y."/>
            <person name="Takita M.A."/>
            <person name="da Silva A.C.R."/>
            <person name="Furlan L.R."/>
            <person name="Carraro D.M."/>
            <person name="Camarotte G."/>
            <person name="Almeida N.F. Jr."/>
            <person name="Carrer H."/>
            <person name="Coutinho L.L."/>
            <person name="El-Dorry H.A."/>
            <person name="Ferro M.I.T."/>
            <person name="Gagliardi P.R."/>
            <person name="Giglioti E."/>
            <person name="Goldman M.H.S."/>
            <person name="Goldman G.H."/>
            <person name="Kimura E.T."/>
            <person name="Ferro E.S."/>
            <person name="Kuramae E.E."/>
            <person name="Lemos E.G.M."/>
            <person name="Lemos M.V.F."/>
            <person name="Mauro S.M.Z."/>
            <person name="Machado M.A."/>
            <person name="Marino C.L."/>
            <person name="Menck C.F."/>
            <person name="Nunes L.R."/>
            <person name="Oliveira R.C."/>
            <person name="Pereira G.G."/>
            <person name="Siqueira W."/>
            <person name="de Souza A.A."/>
            <person name="Tsai S.M."/>
            <person name="Zanca A.S."/>
            <person name="Simpson A.J.G."/>
            <person name="Brumbley S.M."/>
            <person name="Setubal J.C."/>
        </authorList>
    </citation>
    <scope>NUCLEOTIDE SEQUENCE [LARGE SCALE GENOMIC DNA]</scope>
    <source>
        <strain>CTCB07</strain>
    </source>
</reference>
<evidence type="ECO:0000255" key="1">
    <source>
        <dbReference type="HAMAP-Rule" id="MF_00294"/>
    </source>
</evidence>
<evidence type="ECO:0000305" key="2"/>
<protein>
    <recommendedName>
        <fullName evidence="1">Large ribosomal subunit protein bL33</fullName>
    </recommendedName>
    <alternativeName>
        <fullName evidence="2">50S ribosomal protein L33</fullName>
    </alternativeName>
</protein>
<organism>
    <name type="scientific">Leifsonia xyli subsp. xyli (strain CTCB07)</name>
    <dbReference type="NCBI Taxonomy" id="281090"/>
    <lineage>
        <taxon>Bacteria</taxon>
        <taxon>Bacillati</taxon>
        <taxon>Actinomycetota</taxon>
        <taxon>Actinomycetes</taxon>
        <taxon>Micrococcales</taxon>
        <taxon>Microbacteriaceae</taxon>
        <taxon>Leifsonia</taxon>
    </lineage>
</organism>
<accession>Q6ABY5</accession>
<comment type="similarity">
    <text evidence="1">Belongs to the bacterial ribosomal protein bL33 family.</text>
</comment>
<proteinExistence type="inferred from homology"/>
<name>RL33_LEIXX</name>
<feature type="chain" id="PRO_0000170176" description="Large ribosomal subunit protein bL33">
    <location>
        <begin position="1"/>
        <end position="55"/>
    </location>
</feature>
<sequence length="55" mass="6615">MAKQQDVRPIIKLRSTAGTGYTYVTRKNRRNNPDRLVLKKYDPVVRKHVDFREER</sequence>